<reference key="1">
    <citation type="submission" date="1999-08" db="EMBL/GenBank/DDBJ databases">
        <title>Probable malate:quinone oxidoreductase (MQO) (malate dehydrogenase (acceptor))of Pseudomonas fluorescens strain WCS365 involved in competitive tomato root colonization.</title>
        <authorList>
            <person name="Radjkoemar-Bansraj M.R.K.S."/>
            <person name="Phoelich C.C."/>
            <person name="Dekkers L.C."/>
        </authorList>
    </citation>
    <scope>NUCLEOTIDE SEQUENCE [GENOMIC DNA]</scope>
    <source>
        <strain>WCS365</strain>
    </source>
</reference>
<name>MQO_PSEFL</name>
<keyword id="KW-0274">FAD</keyword>
<keyword id="KW-0285">Flavoprotein</keyword>
<keyword id="KW-0560">Oxidoreductase</keyword>
<keyword id="KW-0816">Tricarboxylic acid cycle</keyword>
<dbReference type="EC" id="1.1.5.4" evidence="1"/>
<dbReference type="EMBL" id="AF176206">
    <property type="protein sequence ID" value="AAD51981.1"/>
    <property type="molecule type" value="Genomic_DNA"/>
</dbReference>
<dbReference type="SMR" id="Q9S3Q5"/>
<dbReference type="UniPathway" id="UPA00223">
    <property type="reaction ID" value="UER01008"/>
</dbReference>
<dbReference type="GO" id="GO:0047545">
    <property type="term" value="F:2-hydroxyglutarate dehydrogenase activity"/>
    <property type="evidence" value="ECO:0007669"/>
    <property type="project" value="TreeGrafter"/>
</dbReference>
<dbReference type="GO" id="GO:0008924">
    <property type="term" value="F:L-malate dehydrogenase (quinone) activity"/>
    <property type="evidence" value="ECO:0007669"/>
    <property type="project" value="UniProtKB-UniRule"/>
</dbReference>
<dbReference type="GO" id="GO:0006099">
    <property type="term" value="P:tricarboxylic acid cycle"/>
    <property type="evidence" value="ECO:0007669"/>
    <property type="project" value="UniProtKB-UniRule"/>
</dbReference>
<dbReference type="HAMAP" id="MF_00212">
    <property type="entry name" value="MQO"/>
    <property type="match status" value="1"/>
</dbReference>
<dbReference type="InterPro" id="IPR036188">
    <property type="entry name" value="FAD/NAD-bd_sf"/>
</dbReference>
<dbReference type="InterPro" id="IPR006231">
    <property type="entry name" value="MQO"/>
</dbReference>
<dbReference type="NCBIfam" id="TIGR01320">
    <property type="entry name" value="mal_quin_oxido"/>
    <property type="match status" value="1"/>
</dbReference>
<dbReference type="NCBIfam" id="NF003603">
    <property type="entry name" value="PRK05257.1-1"/>
    <property type="match status" value="1"/>
</dbReference>
<dbReference type="NCBIfam" id="NF003606">
    <property type="entry name" value="PRK05257.2-1"/>
    <property type="match status" value="1"/>
</dbReference>
<dbReference type="NCBIfam" id="NF003611">
    <property type="entry name" value="PRK05257.3-2"/>
    <property type="match status" value="1"/>
</dbReference>
<dbReference type="NCBIfam" id="NF009875">
    <property type="entry name" value="PRK13339.1"/>
    <property type="match status" value="1"/>
</dbReference>
<dbReference type="PANTHER" id="PTHR43104">
    <property type="entry name" value="L-2-HYDROXYGLUTARATE DEHYDROGENASE, MITOCHONDRIAL"/>
    <property type="match status" value="1"/>
</dbReference>
<dbReference type="PANTHER" id="PTHR43104:SF2">
    <property type="entry name" value="L-2-HYDROXYGLUTARATE DEHYDROGENASE, MITOCHONDRIAL"/>
    <property type="match status" value="1"/>
</dbReference>
<dbReference type="Pfam" id="PF06039">
    <property type="entry name" value="Mqo"/>
    <property type="match status" value="1"/>
</dbReference>
<dbReference type="SUPFAM" id="SSF51905">
    <property type="entry name" value="FAD/NAD(P)-binding domain"/>
    <property type="match status" value="1"/>
</dbReference>
<gene>
    <name evidence="1" type="primary">mqo</name>
</gene>
<accession>Q9S3Q5</accession>
<organism>
    <name type="scientific">Pseudomonas fluorescens</name>
    <dbReference type="NCBI Taxonomy" id="294"/>
    <lineage>
        <taxon>Bacteria</taxon>
        <taxon>Pseudomonadati</taxon>
        <taxon>Pseudomonadota</taxon>
        <taxon>Gammaproteobacteria</taxon>
        <taxon>Pseudomonadales</taxon>
        <taxon>Pseudomonadaceae</taxon>
        <taxon>Pseudomonas</taxon>
    </lineage>
</organism>
<protein>
    <recommendedName>
        <fullName evidence="1">Probable malate:quinone oxidoreductase</fullName>
        <ecNumber evidence="1">1.1.5.4</ecNumber>
    </recommendedName>
    <alternativeName>
        <fullName evidence="1">MQO</fullName>
    </alternativeName>
    <alternativeName>
        <fullName evidence="1">Malate dehydrogenase [quinone]</fullName>
    </alternativeName>
</protein>
<proteinExistence type="inferred from homology"/>
<sequence length="505" mass="55006">MAHNEAVDVVHVVLVGAGIMSATLAVLLKELDPAISLEVVELMDSGAAESSNPWNNAGTGHAGLCELNYTPQAADGNVDIKKAVHINTQFEVSKQFWTYLTRKGTFGSSKSFIAPVPHLSFVQGEKGVSFLKKRFELMHQHHAFADMEYTEDKARMAEWMPLMMPGRPADEVIAATRVMNGTDVNFGALTNQLLKHLTSAPDTQVKYCKRVTGLKRNGSGWTVSIKDVNSGSSRDVDAKFVFLGAAGAALPLLQASGIEESKGFGGFPVSGQWLRCDNPEVVKHHQAKVYSQAAVGSPPMSVPHLTPVWSMARNPCLFGPYAGFTTKFLKHGSIMDLPLSVRAGNIGPMLAVARDNMDLTKYLISEVMQSMEQRLESLRRFYPEAKAEDWRLEVAGQRVQIIKKDPKKGGVLQFGTELVAAKDGSLAALLGASPGASVTVSIMLELIERCFPDKAKGEWATKLAEIFPAREKVLETDAALYRKINAQNNIALELVEESSETQSYA</sequence>
<feature type="chain" id="PRO_0000128731" description="Probable malate:quinone oxidoreductase">
    <location>
        <begin position="1"/>
        <end position="505"/>
    </location>
</feature>
<evidence type="ECO:0000255" key="1">
    <source>
        <dbReference type="HAMAP-Rule" id="MF_00212"/>
    </source>
</evidence>
<comment type="catalytic activity">
    <reaction evidence="1">
        <text>(S)-malate + a quinone = a quinol + oxaloacetate</text>
        <dbReference type="Rhea" id="RHEA:46012"/>
        <dbReference type="ChEBI" id="CHEBI:15589"/>
        <dbReference type="ChEBI" id="CHEBI:16452"/>
        <dbReference type="ChEBI" id="CHEBI:24646"/>
        <dbReference type="ChEBI" id="CHEBI:132124"/>
        <dbReference type="EC" id="1.1.5.4"/>
    </reaction>
</comment>
<comment type="cofactor">
    <cofactor evidence="1">
        <name>FAD</name>
        <dbReference type="ChEBI" id="CHEBI:57692"/>
    </cofactor>
</comment>
<comment type="pathway">
    <text evidence="1">Carbohydrate metabolism; tricarboxylic acid cycle; oxaloacetate from (S)-malate (quinone route): step 1/1.</text>
</comment>
<comment type="similarity">
    <text evidence="1">Belongs to the MQO family.</text>
</comment>